<name>UCRI_YEAST</name>
<comment type="function">
    <text evidence="6 7 8 16 18">Component of the ubiquinol-cytochrome c oxidoreductase, a multisubunit transmembrane complex that is part of the mitochondrial electron transport chain which drives oxidative phosphorylation. The respiratory chain contains 3 multisubunit complexes succinate dehydrogenase (complex II, CII), ubiquinol-cytochrome c oxidoreductase (cytochrome b-c1 complex, complex III, CIII) and cytochrome c oxidase (complex IV, CIV), that cooperate to transfer electrons derived from NADH and succinate to molecular oxygen, creating an electrochemical gradient over the inner membrane that drives transmembrane transport and the ATP synthase. The cytochrome b-c1 complex catalyzes electron transfer from ubiquinol to cytochrome c, linking this redox reaction to translocation of protons across the mitochondrial inner membrane, with protons being carried across the membrane as hydrogens on the quinol. In the process called Q cycle, 2 protons are consumed from the matrix, 4 protons are released into the intermembrane space and 2 electrons are passed to cytochrome c (Probable). The Rieske protein is a catalytic core subunit containing a [2Fe-2S] iron-sulfur cluster (PubMed:18390544). It cycles between 2 conformational states during catalysis to transfer electrons from the quinol bound in the Q(0) site in cytochrome b (COB) to cytochrome c1 (CYT1) (Probable) (PubMed:1657998, PubMed:2538628).</text>
</comment>
<comment type="catalytic activity">
    <reaction evidence="6 8">
        <text>a quinol + 2 Fe(III)-[cytochrome c](out) = a quinone + 2 Fe(II)-[cytochrome c](out) + 2 H(+)(out)</text>
        <dbReference type="Rhea" id="RHEA:11484"/>
        <dbReference type="Rhea" id="RHEA-COMP:10350"/>
        <dbReference type="Rhea" id="RHEA-COMP:14399"/>
        <dbReference type="ChEBI" id="CHEBI:15378"/>
        <dbReference type="ChEBI" id="CHEBI:24646"/>
        <dbReference type="ChEBI" id="CHEBI:29033"/>
        <dbReference type="ChEBI" id="CHEBI:29034"/>
        <dbReference type="ChEBI" id="CHEBI:132124"/>
        <dbReference type="EC" id="7.1.1.8"/>
    </reaction>
</comment>
<comment type="cofactor">
    <cofactor evidence="4 5 7 11">
        <name>[2Fe-2S] cluster</name>
        <dbReference type="ChEBI" id="CHEBI:190135"/>
    </cofactor>
    <text evidence="4 5 7 11">Binds 1 [2Fe-2S] cluster per subunit.</text>
</comment>
<comment type="subunit">
    <text evidence="2 3 4 5 6 7 8 11 12">Component of the ubiquinol-cytochrome c oxidoreductase (cytochrome b-c1 complex, complex III, CIII), a multisubunit enzyme composed of 10 subunits. The complex is composed of 3 respiratory subunits cytochrome b (COB), cytochrome c1 (CYT1) and Rieske protein (RIP1), 2 core protein subunits COR1 and QCR2, and 5 low-molecular weight protein subunits QCR6, QCR7, QCR8, QCR9 and QCR10 (PubMed:10873857, PubMed:11880631, PubMed:1657998, PubMed:18390544, PubMed:2538628, PubMed:30598554). The complex exists as an obligatory dimer and forms supercomplexes (SCs) in the inner mitochondrial membrane with a monomer or a dimer of cytochrome c oxidase (complex IV, CIV), resulting in 2 different assemblies (supercomplexes III(2)IV and III(2)IV(2)) (PubMed:10764779, PubMed:10775262, PubMed:30598554, PubMed:30598556). RIP1 interacts with QCR10 on the intermembrane space (IMS) side, and with QCR9 (PubMed:30598554, PubMed:30598556).</text>
</comment>
<comment type="subcellular location">
    <subcellularLocation>
        <location evidence="7 11">Mitochondrion inner membrane</location>
        <topology evidence="7 11">Single-pass membrane protein</topology>
    </subcellularLocation>
</comment>
<comment type="PTM">
    <text evidence="13 14">Processed by both the mitochondrial processing peptidase (MPP) and the mitochondrial intermediate protease (MIP). Initially, MPP removes 22 amino acids from the newly imported precursor in the mitochondrial matrix. This proteolytic processing is then followed by a second proteolytic cleavage by MIP, which removes an octapeptide to generate mature-sized RIP1.</text>
</comment>
<comment type="miscellaneous">
    <text evidence="17">The Rieske protein is a high potential 2Fe-2S protein.</text>
</comment>
<comment type="similarity">
    <text evidence="15">Belongs to the Rieske iron-sulfur protein family.</text>
</comment>
<reference key="1">
    <citation type="journal article" date="1987" name="J. Biol. Chem.">
        <title>Isolation and characterization of the nuclear gene encoding the Rieske iron-sulfur protein (RIP1) from Saccharomyces cerevisiae.</title>
        <authorList>
            <person name="Beckmann J.D."/>
            <person name="Ljungdahl P.O."/>
            <person name="Lopez J.L."/>
            <person name="Trumpower B.L."/>
        </authorList>
    </citation>
    <scope>NUCLEOTIDE SEQUENCE [GENOMIC DNA]</scope>
    <scope>PROTEIN SEQUENCE OF 31-40</scope>
    <source>
        <strain>ATCC 64665 / S288c / DC5</strain>
    </source>
</reference>
<reference key="2">
    <citation type="journal article" date="1989" name="J. Biol. Chem.">
        <title>Mutational analysis of the mitochondrial Rieske iron-sulfur protein of Saccharomyces cerevisiae. I. Construction of a RIP1 deletion strain and isolation of temperature-sensitive mutants.</title>
        <authorList>
            <person name="Beckmann J.D."/>
            <person name="Ljungdahl P.O."/>
            <person name="Trumpower B.L."/>
        </authorList>
    </citation>
    <scope>NUCLEOTIDE SEQUENCE [GENOMIC DNA]</scope>
    <scope>MUTAGENESIS</scope>
    <scope>MUTAGENESIS OF PRO-203</scope>
</reference>
<reference key="3">
    <citation type="journal article" date="1997" name="Nature">
        <title>The nucleotide sequence of Saccharomyces cerevisiae chromosome V.</title>
        <authorList>
            <person name="Dietrich F.S."/>
            <person name="Mulligan J.T."/>
            <person name="Hennessy K.M."/>
            <person name="Yelton M.A."/>
            <person name="Allen E."/>
            <person name="Araujo R."/>
            <person name="Aviles E."/>
            <person name="Berno A."/>
            <person name="Brennan T."/>
            <person name="Carpenter J."/>
            <person name="Chen E."/>
            <person name="Cherry J.M."/>
            <person name="Chung E."/>
            <person name="Duncan M."/>
            <person name="Guzman E."/>
            <person name="Hartzell G."/>
            <person name="Hunicke-Smith S."/>
            <person name="Hyman R.W."/>
            <person name="Kayser A."/>
            <person name="Komp C."/>
            <person name="Lashkari D."/>
            <person name="Lew H."/>
            <person name="Lin D."/>
            <person name="Mosedale D."/>
            <person name="Nakahara K."/>
            <person name="Namath A."/>
            <person name="Norgren R."/>
            <person name="Oefner P."/>
            <person name="Oh C."/>
            <person name="Petel F.X."/>
            <person name="Roberts D."/>
            <person name="Sehl P."/>
            <person name="Schramm S."/>
            <person name="Shogren T."/>
            <person name="Smith V."/>
            <person name="Taylor P."/>
            <person name="Wei Y."/>
            <person name="Botstein D."/>
            <person name="Davis R.W."/>
        </authorList>
    </citation>
    <scope>NUCLEOTIDE SEQUENCE [LARGE SCALE GENOMIC DNA]</scope>
    <source>
        <strain>ATCC 204508 / S288c</strain>
    </source>
</reference>
<reference key="4">
    <citation type="journal article" date="2014" name="G3 (Bethesda)">
        <title>The reference genome sequence of Saccharomyces cerevisiae: Then and now.</title>
        <authorList>
            <person name="Engel S.R."/>
            <person name="Dietrich F.S."/>
            <person name="Fisk D.G."/>
            <person name="Binkley G."/>
            <person name="Balakrishnan R."/>
            <person name="Costanzo M.C."/>
            <person name="Dwight S.S."/>
            <person name="Hitz B.C."/>
            <person name="Karra K."/>
            <person name="Nash R.S."/>
            <person name="Weng S."/>
            <person name="Wong E.D."/>
            <person name="Lloyd P."/>
            <person name="Skrzypek M.S."/>
            <person name="Miyasato S.R."/>
            <person name="Simison M."/>
            <person name="Cherry J.M."/>
        </authorList>
    </citation>
    <scope>GENOME REANNOTATION</scope>
    <source>
        <strain>ATCC 204508 / S288c</strain>
    </source>
</reference>
<reference key="5">
    <citation type="journal article" date="2007" name="Genome Res.">
        <title>Approaching a complete repository of sequence-verified protein-encoding clones for Saccharomyces cerevisiae.</title>
        <authorList>
            <person name="Hu Y."/>
            <person name="Rolfs A."/>
            <person name="Bhullar B."/>
            <person name="Murthy T.V.S."/>
            <person name="Zhu C."/>
            <person name="Berger M.F."/>
            <person name="Camargo A.A."/>
            <person name="Kelley F."/>
            <person name="McCarron S."/>
            <person name="Jepson D."/>
            <person name="Richardson A."/>
            <person name="Raphael J."/>
            <person name="Moreira D."/>
            <person name="Taycher E."/>
            <person name="Zuo D."/>
            <person name="Mohr S."/>
            <person name="Kane M.F."/>
            <person name="Williamson J."/>
            <person name="Simpson A.J.G."/>
            <person name="Bulyk M.L."/>
            <person name="Harlow E."/>
            <person name="Marsischky G."/>
            <person name="Kolodner R.D."/>
            <person name="LaBaer J."/>
        </authorList>
    </citation>
    <scope>NUCLEOTIDE SEQUENCE [GENOMIC DNA]</scope>
    <source>
        <strain>ATCC 204508 / S288c</strain>
    </source>
</reference>
<reference key="6">
    <citation type="journal article" date="1994" name="Biochem. Soc. Trans.">
        <title>Protease maturation of the Rieske iron-sulphur protein after its insertion into the mitochondrial cytochrome bc1 complex of Saccharomyces cerevisiae.</title>
        <authorList>
            <person name="Graham L.A."/>
            <person name="Brandt U."/>
            <person name="Trumpower B.L."/>
        </authorList>
    </citation>
    <scope>PROTEIN SEQUENCE OF N-TERMINUS</scope>
    <scope>PROTEOLYTIC CLEAVAGE</scope>
</reference>
<reference key="7">
    <citation type="journal article" date="1983" name="J. Biol. Chem.">
        <title>Kinetics of assembly of complex III into the yeast mitochondrial membrane. Evidence for a precursor to the iron-sulfur protein.</title>
        <authorList>
            <person name="Sidhu A."/>
            <person name="Beattie D.S."/>
        </authorList>
    </citation>
    <scope>PROTEOLYTIC CLEAVAGE</scope>
</reference>
<reference key="8">
    <citation type="journal article" date="1989" name="J. Mol. Biol.">
        <title>Structure and function of the mitochondrial bc1 complex. A mutational analysis of the yeast Rieske iron-sulfur protein.</title>
        <authorList>
            <person name="Gatti D.L."/>
            <person name="Meinhardt S.W."/>
            <person name="Ohnishi T."/>
            <person name="Tzagoloff A."/>
        </authorList>
    </citation>
    <scope>FUNCTION</scope>
    <scope>CATALYTIC ACTIVITY</scope>
    <scope>SUBUNIT</scope>
    <scope>MUTAGENESIS OF GLY-157; GLY-163; PRO-166; CYS-178; PRO-179; SER-183; ASP-186; GLY-189; PRO-195; ALA-196 AND PRO-203</scope>
    <source>
        <strain>D273-10B/A1</strain>
    </source>
</reference>
<reference key="9">
    <citation type="journal article" date="1991" name="J. Biol. Chem.">
        <title>Mutational analysis of the mitochondrial Rieske iron-sulfur protein of Saccharomyces cerevisiae. III. Import, protease processing, and assembly into the cytochrome bc1 complex of iron-sulfur protein lacking the iron-sulfur cluster.</title>
        <authorList>
            <person name="Graham L.A."/>
            <person name="Trumpower B.L."/>
        </authorList>
    </citation>
    <scope>FUNCTION</scope>
    <scope>CATALYTIC ACTIVITY</scope>
    <scope>SUBUNIT</scope>
    <scope>MUTAGENESIS OF CYS-159; HIS-161; CYS-164; CYS-178; HIS-181 AND HIS-184</scope>
</reference>
<reference key="10">
    <citation type="journal article" date="2000" name="EMBO J.">
        <title>Supercomplexes in the respiratory chains of yeast and mammalian mitochondria.</title>
        <authorList>
            <person name="Schaegger H."/>
            <person name="Pfeiffer K."/>
        </authorList>
    </citation>
    <scope>FORMATION OF CYTOCHROME BC1-CYTOCHROME C OXIDASE SUPERCOMPLEX</scope>
</reference>
<reference key="11">
    <citation type="journal article" date="2000" name="J. Biol. Chem.">
        <title>The cytochrome bc1 and cytochrome c oxidase complexes associate to form a single supracomplex in yeast mitochondria.</title>
        <authorList>
            <person name="Cruciat C.M."/>
            <person name="Brunner S."/>
            <person name="Baumann F."/>
            <person name="Neupert W."/>
            <person name="Stuart R.A."/>
        </authorList>
    </citation>
    <scope>FORMATION OF CYTOCHROME BC1-CYTOCHROME C OXIDASE SUPERCOMPLEX</scope>
</reference>
<reference key="12">
    <citation type="journal article" date="2000" name="Structure">
        <title>Structure at 2.3 A resolution of the cytochrome bc1 complex from the yeast Saccharomyces cerevisiae co-crystallized with an antibody Fv fragment.</title>
        <authorList>
            <person name="Hunte C."/>
            <person name="Koepke J."/>
            <person name="Lange C."/>
            <person name="Rossmanith T."/>
            <person name="Michel H."/>
        </authorList>
    </citation>
    <scope>X-RAY CRYSTALLOGRAPHY (2.30 ANGSTROMS) OF 31-215 IN COMPLEX WITH IRON-SULFUR (2FE-2S)</scope>
    <scope>DISULFIDE BONDS</scope>
</reference>
<reference key="13">
    <citation type="journal article" date="2002" name="Proc. Natl. Acad. Sci. U.S.A.">
        <title>Crystal structure of the yeast cytochrome bc1 complex with its bound substrate cytochrome c.</title>
        <authorList>
            <person name="Lange C."/>
            <person name="Hunte C."/>
        </authorList>
    </citation>
    <scope>X-RAY CRYSTALLOGRAPHY (2.97 ANGSTROMS) OF 31-215 IN COMPLEX WITH IRON-SULFUR (2FE-2S)</scope>
    <scope>DISULFIDE BONDS</scope>
</reference>
<reference key="14">
    <citation type="journal article" date="2008" name="J. Biol. Chem.">
        <title>Structure of complex III with bound cytochrome c in reduced state and definition of a minimal core interface for electron transfer.</title>
        <authorList>
            <person name="Solmaz S.R."/>
            <person name="Hunte C."/>
        </authorList>
    </citation>
    <scope>X-RAY CRYSTALLOGRAPHY (1.9 ANGSTROMS) OF 31-215 IN THE BC1 COMPLEX</scope>
    <scope>COMPLEX WITH IRON-SULFUR (2FE-2S)</scope>
    <scope>DISULFIDE BOND</scope>
    <scope>SUBCELLULAR LOCATION</scope>
</reference>
<reference key="15">
    <citation type="journal article" date="2019" name="Nat. Struct. Mol. Biol.">
        <title>Cryo-EM structure of the yeast respiratory supercomplex.</title>
        <authorList>
            <person name="Rathore S."/>
            <person name="Berndtsson J."/>
            <person name="Marin-Buera L."/>
            <person name="Conrad J."/>
            <person name="Carroni M."/>
            <person name="Brzezinski P."/>
            <person name="Ott M."/>
        </authorList>
    </citation>
    <scope>STRUCTURE BY ELECTRON MICROSCOPY (3.23 ANGSTROMS)</scope>
</reference>
<reference key="16">
    <citation type="journal article" date="2019" name="Nat. Struct. Mol. Biol.">
        <title>Structure of yeast cytochrome c oxidase in a supercomplex with cytochrome bc1.</title>
        <authorList>
            <person name="Hartley A.M."/>
            <person name="Lukoyanova N."/>
            <person name="Zhang Y."/>
            <person name="Cabrera-Orefice A."/>
            <person name="Arnold S."/>
            <person name="Meunier B."/>
            <person name="Pinotsis N."/>
            <person name="Marechal A."/>
        </authorList>
    </citation>
    <scope>STRUCTURE BY ELECTRON MICROSCOPY (3.35 ANGSTROMS) IN COMPLEX WITH IRON-SULFUR (2FE-2S)</scope>
</reference>
<protein>
    <recommendedName>
        <fullName>Cytochrome b-c1 complex subunit Rieske, mitochondrial</fullName>
        <ecNumber evidence="6 8">7.1.1.8</ecNumber>
    </recommendedName>
    <alternativeName>
        <fullName>Complex III subunit 5</fullName>
    </alternativeName>
    <alternativeName>
        <fullName>Rieske iron-sulfur protein</fullName>
        <shortName>RISP</shortName>
    </alternativeName>
    <alternativeName>
        <fullName>Ubiquinol-cytochrome c oxidoreductase iron-sulfur subunit</fullName>
    </alternativeName>
</protein>
<proteinExistence type="evidence at protein level"/>
<dbReference type="EC" id="7.1.1.8" evidence="6 8"/>
<dbReference type="EMBL" id="M23316">
    <property type="protein sequence ID" value="AAA34980.1"/>
    <property type="molecule type" value="Genomic_DNA"/>
</dbReference>
<dbReference type="EMBL" id="M24500">
    <property type="protein sequence ID" value="AAA34981.1"/>
    <property type="molecule type" value="Genomic_DNA"/>
</dbReference>
<dbReference type="EMBL" id="U18530">
    <property type="protein sequence ID" value="AAB64501.1"/>
    <property type="molecule type" value="Genomic_DNA"/>
</dbReference>
<dbReference type="EMBL" id="AY558341">
    <property type="protein sequence ID" value="AAS56667.1"/>
    <property type="molecule type" value="Genomic_DNA"/>
</dbReference>
<dbReference type="EMBL" id="BK006939">
    <property type="protein sequence ID" value="DAA07628.1"/>
    <property type="molecule type" value="Genomic_DNA"/>
</dbReference>
<dbReference type="PIR" id="A29318">
    <property type="entry name" value="A29318"/>
</dbReference>
<dbReference type="RefSeq" id="NP_010890.3">
    <property type="nucleotide sequence ID" value="NM_001178839.3"/>
</dbReference>
<dbReference type="PDB" id="1EZV">
    <property type="method" value="X-ray"/>
    <property type="resolution" value="2.30 A"/>
    <property type="chains" value="E=31-215"/>
</dbReference>
<dbReference type="PDB" id="1KB9">
    <property type="method" value="X-ray"/>
    <property type="resolution" value="2.30 A"/>
    <property type="chains" value="E=31-215"/>
</dbReference>
<dbReference type="PDB" id="1KYO">
    <property type="method" value="X-ray"/>
    <property type="resolution" value="2.97 A"/>
    <property type="chains" value="E/P=31-215"/>
</dbReference>
<dbReference type="PDB" id="1P84">
    <property type="method" value="X-ray"/>
    <property type="resolution" value="2.50 A"/>
    <property type="chains" value="E=31-215"/>
</dbReference>
<dbReference type="PDB" id="2IBZ">
    <property type="method" value="X-ray"/>
    <property type="resolution" value="2.30 A"/>
    <property type="chains" value="E=31-215"/>
</dbReference>
<dbReference type="PDB" id="3CX5">
    <property type="method" value="X-ray"/>
    <property type="resolution" value="1.90 A"/>
    <property type="chains" value="E/P=31-215"/>
</dbReference>
<dbReference type="PDB" id="3CXH">
    <property type="method" value="X-ray"/>
    <property type="resolution" value="2.50 A"/>
    <property type="chains" value="E/P=31-215"/>
</dbReference>
<dbReference type="PDB" id="4PD4">
    <property type="method" value="X-ray"/>
    <property type="resolution" value="3.04 A"/>
    <property type="chains" value="E=31-215"/>
</dbReference>
<dbReference type="PDB" id="6GIQ">
    <property type="method" value="EM"/>
    <property type="resolution" value="3.23 A"/>
    <property type="chains" value="E/P=1-215"/>
</dbReference>
<dbReference type="PDB" id="6HU9">
    <property type="method" value="EM"/>
    <property type="resolution" value="3.35 A"/>
    <property type="chains" value="E/P=31-215"/>
</dbReference>
<dbReference type="PDB" id="6T0B">
    <property type="method" value="EM"/>
    <property type="resolution" value="2.80 A"/>
    <property type="chains" value="E/P=31-215"/>
</dbReference>
<dbReference type="PDB" id="6T15">
    <property type="method" value="EM"/>
    <property type="resolution" value="3.29 A"/>
    <property type="chains" value="E/P=31-215"/>
</dbReference>
<dbReference type="PDB" id="6YMX">
    <property type="method" value="EM"/>
    <property type="resolution" value="3.17 A"/>
    <property type="chains" value="E/P=31-215"/>
</dbReference>
<dbReference type="PDB" id="8E7S">
    <property type="method" value="EM"/>
    <property type="resolution" value="3.20 A"/>
    <property type="chains" value="C/c=1-215"/>
</dbReference>
<dbReference type="PDB" id="8EC0">
    <property type="method" value="EM"/>
    <property type="resolution" value="3.30 A"/>
    <property type="chains" value="C/c=1-215"/>
</dbReference>
<dbReference type="PDB" id="8YHQ">
    <property type="method" value="EM"/>
    <property type="resolution" value="2.42 A"/>
    <property type="chains" value="E/N=31-215"/>
</dbReference>
<dbReference type="PDB" id="8YIN">
    <property type="method" value="EM"/>
    <property type="resolution" value="2.74 A"/>
    <property type="chains" value="E/P=31-215"/>
</dbReference>
<dbReference type="PDB" id="8ZMT">
    <property type="method" value="EM"/>
    <property type="resolution" value="2.52 A"/>
    <property type="chains" value="E/P=31-215"/>
</dbReference>
<dbReference type="PDB" id="9ETZ">
    <property type="method" value="EM"/>
    <property type="resolution" value="2.40 A"/>
    <property type="chains" value="E/P=31-215"/>
</dbReference>
<dbReference type="PDBsum" id="1EZV"/>
<dbReference type="PDBsum" id="1KB9"/>
<dbReference type="PDBsum" id="1KYO"/>
<dbReference type="PDBsum" id="1P84"/>
<dbReference type="PDBsum" id="2IBZ"/>
<dbReference type="PDBsum" id="3CX5"/>
<dbReference type="PDBsum" id="3CXH"/>
<dbReference type="PDBsum" id="4PD4"/>
<dbReference type="PDBsum" id="6GIQ"/>
<dbReference type="PDBsum" id="6HU9"/>
<dbReference type="PDBsum" id="6T0B"/>
<dbReference type="PDBsum" id="6T15"/>
<dbReference type="PDBsum" id="6YMX"/>
<dbReference type="PDBsum" id="8E7S"/>
<dbReference type="PDBsum" id="8EC0"/>
<dbReference type="PDBsum" id="8YHQ"/>
<dbReference type="PDBsum" id="8YIN"/>
<dbReference type="PDBsum" id="8ZMT"/>
<dbReference type="PDBsum" id="9ETZ"/>
<dbReference type="EMDB" id="EMD-0262"/>
<dbReference type="EMDB" id="EMD-10317"/>
<dbReference type="EMDB" id="EMD-10340"/>
<dbReference type="EMDB" id="EMD-10847"/>
<dbReference type="EMDB" id="EMD-19963"/>
<dbReference type="EMDB" id="EMD-27940"/>
<dbReference type="EMDB" id="EMD-28011"/>
<dbReference type="SMR" id="P08067"/>
<dbReference type="BioGRID" id="36705">
    <property type="interactions" value="290"/>
</dbReference>
<dbReference type="ComplexPortal" id="CPX-567">
    <property type="entry name" value="Mitochondrial respiratory chain complex III"/>
</dbReference>
<dbReference type="DIP" id="DIP-6616N"/>
<dbReference type="FunCoup" id="P08067">
    <property type="interactions" value="1026"/>
</dbReference>
<dbReference type="IntAct" id="P08067">
    <property type="interactions" value="26"/>
</dbReference>
<dbReference type="STRING" id="4932.YEL024W"/>
<dbReference type="TCDB" id="3.D.3.3.1">
    <property type="family name" value="the proton-translocating quinol:cytochrome c reductase (qcr) superfamily"/>
</dbReference>
<dbReference type="PaxDb" id="4932-YEL024W"/>
<dbReference type="PeptideAtlas" id="P08067"/>
<dbReference type="ABCD" id="P08067">
    <property type="antibodies" value="1 sequenced antibody"/>
</dbReference>
<dbReference type="EnsemblFungi" id="YEL024W_mRNA">
    <property type="protein sequence ID" value="YEL024W"/>
    <property type="gene ID" value="YEL024W"/>
</dbReference>
<dbReference type="GeneID" id="856689"/>
<dbReference type="KEGG" id="sce:YEL024W"/>
<dbReference type="AGR" id="SGD:S000000750"/>
<dbReference type="SGD" id="S000000750">
    <property type="gene designation" value="RIP1"/>
</dbReference>
<dbReference type="VEuPathDB" id="FungiDB:YEL024W"/>
<dbReference type="eggNOG" id="KOG1671">
    <property type="taxonomic scope" value="Eukaryota"/>
</dbReference>
<dbReference type="GeneTree" id="ENSGT00390000001014"/>
<dbReference type="HOGENOM" id="CLU_055690_0_1_1"/>
<dbReference type="InParanoid" id="P08067"/>
<dbReference type="OMA" id="KRTWLIA"/>
<dbReference type="OrthoDB" id="1637982at2759"/>
<dbReference type="BioCyc" id="MetaCyc:YEL024W-MONOMER"/>
<dbReference type="BioCyc" id="YEAST:YEL024W-MONOMER"/>
<dbReference type="Reactome" id="R-SCE-611105">
    <property type="pathway name" value="Respiratory electron transport"/>
</dbReference>
<dbReference type="Reactome" id="R-SCE-9865878">
    <property type="pathway name" value="Complex III assembly"/>
</dbReference>
<dbReference type="Reactome" id="R-SCE-9865881">
    <property type="pathway name" value="Complex III assembly"/>
</dbReference>
<dbReference type="BioGRID-ORCS" id="856689">
    <property type="hits" value="2 hits in 10 CRISPR screens"/>
</dbReference>
<dbReference type="EvolutionaryTrace" id="P08067"/>
<dbReference type="PRO" id="PR:P08067"/>
<dbReference type="Proteomes" id="UP000002311">
    <property type="component" value="Chromosome V"/>
</dbReference>
<dbReference type="RNAct" id="P08067">
    <property type="molecule type" value="protein"/>
</dbReference>
<dbReference type="GO" id="GO:0005743">
    <property type="term" value="C:mitochondrial inner membrane"/>
    <property type="evidence" value="ECO:0000314"/>
    <property type="project" value="ComplexPortal"/>
</dbReference>
<dbReference type="GO" id="GO:0005739">
    <property type="term" value="C:mitochondrion"/>
    <property type="evidence" value="ECO:0000353"/>
    <property type="project" value="SGD"/>
</dbReference>
<dbReference type="GO" id="GO:0045275">
    <property type="term" value="C:respiratory chain complex III"/>
    <property type="evidence" value="ECO:0000314"/>
    <property type="project" value="SGD"/>
</dbReference>
<dbReference type="GO" id="GO:0051537">
    <property type="term" value="F:2 iron, 2 sulfur cluster binding"/>
    <property type="evidence" value="ECO:0007669"/>
    <property type="project" value="UniProtKB-KW"/>
</dbReference>
<dbReference type="GO" id="GO:0046872">
    <property type="term" value="F:metal ion binding"/>
    <property type="evidence" value="ECO:0007669"/>
    <property type="project" value="UniProtKB-KW"/>
</dbReference>
<dbReference type="GO" id="GO:0016491">
    <property type="term" value="F:oxidoreductase activity"/>
    <property type="evidence" value="ECO:0000318"/>
    <property type="project" value="GO_Central"/>
</dbReference>
<dbReference type="GO" id="GO:0008121">
    <property type="term" value="F:ubiquinol-cytochrome-c reductase activity"/>
    <property type="evidence" value="ECO:0000315"/>
    <property type="project" value="SGD"/>
</dbReference>
<dbReference type="GO" id="GO:0009060">
    <property type="term" value="P:aerobic respiration"/>
    <property type="evidence" value="ECO:0000315"/>
    <property type="project" value="SGD"/>
</dbReference>
<dbReference type="GO" id="GO:0045333">
    <property type="term" value="P:cellular respiration"/>
    <property type="evidence" value="ECO:0000314"/>
    <property type="project" value="ComplexPortal"/>
</dbReference>
<dbReference type="GO" id="GO:0006122">
    <property type="term" value="P:mitochondrial electron transport, ubiquinol to cytochrome c"/>
    <property type="evidence" value="ECO:0000314"/>
    <property type="project" value="ComplexPortal"/>
</dbReference>
<dbReference type="CDD" id="cd03470">
    <property type="entry name" value="Rieske_cytochrome_bc1"/>
    <property type="match status" value="1"/>
</dbReference>
<dbReference type="DisProt" id="DP00687"/>
<dbReference type="FunFam" id="1.20.5.270:FF:000002">
    <property type="entry name" value="Cytochrome b-c1 complex subunit Rieske, mitochondrial"/>
    <property type="match status" value="1"/>
</dbReference>
<dbReference type="FunFam" id="2.102.10.10:FF:000001">
    <property type="entry name" value="Cytochrome b-c1 complex subunit Rieske, mitochondrial"/>
    <property type="match status" value="1"/>
</dbReference>
<dbReference type="Gene3D" id="2.102.10.10">
    <property type="entry name" value="Rieske [2Fe-2S] iron-sulphur domain"/>
    <property type="match status" value="1"/>
</dbReference>
<dbReference type="Gene3D" id="1.20.5.270">
    <property type="entry name" value="Ubiquinol cytochrome reductase, transmembrane domain"/>
    <property type="match status" value="1"/>
</dbReference>
<dbReference type="InterPro" id="IPR037008">
    <property type="entry name" value="bc1_Rieske_TM_sf"/>
</dbReference>
<dbReference type="InterPro" id="IPR017941">
    <property type="entry name" value="Rieske_2Fe-2S"/>
</dbReference>
<dbReference type="InterPro" id="IPR036922">
    <property type="entry name" value="Rieske_2Fe-2S_sf"/>
</dbReference>
<dbReference type="InterPro" id="IPR014349">
    <property type="entry name" value="Rieske_Fe-S_prot"/>
</dbReference>
<dbReference type="InterPro" id="IPR005805">
    <property type="entry name" value="Rieske_Fe-S_prot_C"/>
</dbReference>
<dbReference type="InterPro" id="IPR004192">
    <property type="entry name" value="Rieske_TM"/>
</dbReference>
<dbReference type="InterPro" id="IPR006317">
    <property type="entry name" value="Ubiquinol_cyt_c_Rdtase_Fe-S-su"/>
</dbReference>
<dbReference type="NCBIfam" id="TIGR01416">
    <property type="entry name" value="Rieske_proteo"/>
    <property type="match status" value="1"/>
</dbReference>
<dbReference type="PANTHER" id="PTHR10134">
    <property type="entry name" value="CYTOCHROME B-C1 COMPLEX SUBUNIT RIESKE, MITOCHONDRIAL"/>
    <property type="match status" value="1"/>
</dbReference>
<dbReference type="Pfam" id="PF00355">
    <property type="entry name" value="Rieske"/>
    <property type="match status" value="1"/>
</dbReference>
<dbReference type="Pfam" id="PF02921">
    <property type="entry name" value="UCR_TM"/>
    <property type="match status" value="1"/>
</dbReference>
<dbReference type="PRINTS" id="PR00162">
    <property type="entry name" value="RIESKE"/>
</dbReference>
<dbReference type="SUPFAM" id="SSF50022">
    <property type="entry name" value="ISP domain"/>
    <property type="match status" value="1"/>
</dbReference>
<dbReference type="SUPFAM" id="SSF81502">
    <property type="entry name" value="ISP transmembrane anchor"/>
    <property type="match status" value="1"/>
</dbReference>
<dbReference type="PROSITE" id="PS51296">
    <property type="entry name" value="RIESKE"/>
    <property type="match status" value="1"/>
</dbReference>
<organism>
    <name type="scientific">Saccharomyces cerevisiae (strain ATCC 204508 / S288c)</name>
    <name type="common">Baker's yeast</name>
    <dbReference type="NCBI Taxonomy" id="559292"/>
    <lineage>
        <taxon>Eukaryota</taxon>
        <taxon>Fungi</taxon>
        <taxon>Dikarya</taxon>
        <taxon>Ascomycota</taxon>
        <taxon>Saccharomycotina</taxon>
        <taxon>Saccharomycetes</taxon>
        <taxon>Saccharomycetales</taxon>
        <taxon>Saccharomycetaceae</taxon>
        <taxon>Saccharomyces</taxon>
    </lineage>
</organism>
<keyword id="KW-0001">2Fe-2S</keyword>
<keyword id="KW-0002">3D-structure</keyword>
<keyword id="KW-0903">Direct protein sequencing</keyword>
<keyword id="KW-1015">Disulfide bond</keyword>
<keyword id="KW-0249">Electron transport</keyword>
<keyword id="KW-0408">Iron</keyword>
<keyword id="KW-0411">Iron-sulfur</keyword>
<keyword id="KW-0472">Membrane</keyword>
<keyword id="KW-0479">Metal-binding</keyword>
<keyword id="KW-0496">Mitochondrion</keyword>
<keyword id="KW-0999">Mitochondrion inner membrane</keyword>
<keyword id="KW-1185">Reference proteome</keyword>
<keyword id="KW-0679">Respiratory chain</keyword>
<keyword id="KW-0809">Transit peptide</keyword>
<keyword id="KW-1278">Translocase</keyword>
<keyword id="KW-0812">Transmembrane</keyword>
<keyword id="KW-1133">Transmembrane helix</keyword>
<keyword id="KW-0813">Transport</keyword>
<gene>
    <name type="primary">RIP1</name>
    <name type="ordered locus">YEL024W</name>
</gene>
<feature type="transit peptide" description="Mitochondrion" evidence="10 14">
    <location>
        <begin position="1"/>
        <end position="22"/>
    </location>
</feature>
<feature type="propeptide" id="PRO_0000449195" description="Removed in mature form" evidence="10 14">
    <location>
        <begin position="23"/>
        <end position="30"/>
    </location>
</feature>
<feature type="chain" id="PRO_0000030683" description="Cytochrome b-c1 complex subunit Rieske, mitochondrial">
    <location>
        <begin position="31"/>
        <end position="215"/>
    </location>
</feature>
<feature type="topological domain" description="Mitochondrial matrix" evidence="7 11">
    <location>
        <begin position="31"/>
        <end position="50"/>
    </location>
</feature>
<feature type="transmembrane region" description="Helical" evidence="7 11">
    <location>
        <begin position="51"/>
        <end position="80"/>
    </location>
</feature>
<feature type="topological domain" description="Mitochondrial intermembrane" evidence="7 11">
    <location>
        <begin position="81"/>
        <end position="215"/>
    </location>
</feature>
<feature type="domain" description="Rieske" evidence="1">
    <location>
        <begin position="123"/>
        <end position="214"/>
    </location>
</feature>
<feature type="region of interest" description="Hinge" evidence="12">
    <location>
        <begin position="90"/>
        <end position="93"/>
    </location>
</feature>
<feature type="binding site" evidence="4 5 7 11 19 20 21 22 23 24 25 26">
    <location>
        <position position="159"/>
    </location>
    <ligand>
        <name>[2Fe-2S] cluster</name>
        <dbReference type="ChEBI" id="CHEBI:190135"/>
    </ligand>
</feature>
<feature type="binding site" evidence="4 5 7 11 19 20 21 22 23 24 25 26">
    <location>
        <position position="161"/>
    </location>
    <ligand>
        <name>[2Fe-2S] cluster</name>
        <dbReference type="ChEBI" id="CHEBI:190135"/>
    </ligand>
</feature>
<feature type="binding site" evidence="4 5 7 11 19 20 21 22 23 24 25 26">
    <location>
        <position position="178"/>
    </location>
    <ligand>
        <name>[2Fe-2S] cluster</name>
        <dbReference type="ChEBI" id="CHEBI:190135"/>
    </ligand>
</feature>
<feature type="binding site" evidence="4 5 7 11 19 20 21 22 23 24 25 26">
    <location>
        <position position="181"/>
    </location>
    <ligand>
        <name>[2Fe-2S] cluster</name>
        <dbReference type="ChEBI" id="CHEBI:190135"/>
    </ligand>
</feature>
<feature type="disulfide bond" evidence="1 4 5 7 19 20 21 22 23 24 25 26">
    <location>
        <begin position="164"/>
        <end position="180"/>
    </location>
</feature>
<feature type="mutagenesis site" description="Loss of activity." evidence="8">
    <original>G</original>
    <variation>D</variation>
    <location>
        <position position="157"/>
    </location>
</feature>
<feature type="mutagenesis site" description="Loss of activity." evidence="6">
    <original>C</original>
    <variation>S</variation>
    <location>
        <position position="159"/>
    </location>
</feature>
<feature type="mutagenesis site" description="Loss of activity." evidence="6">
    <original>H</original>
    <variation>R</variation>
    <location>
        <position position="161"/>
    </location>
</feature>
<feature type="mutagenesis site" description="Partial loss of activity." evidence="8">
    <original>G</original>
    <variation>D</variation>
    <location>
        <position position="163"/>
    </location>
</feature>
<feature type="mutagenesis site" description="Loss of activity." evidence="6">
    <original>C</original>
    <variation>S</variation>
    <location>
        <position position="164"/>
    </location>
</feature>
<feature type="mutagenesis site" description="Partial loss of activity." evidence="8">
    <original>P</original>
    <variation>L</variation>
    <location>
        <position position="166"/>
    </location>
</feature>
<feature type="mutagenesis site" description="Loss of activity." evidence="6 8">
    <original>C</original>
    <variation>S</variation>
    <variation>Y</variation>
    <location>
        <position position="178"/>
    </location>
</feature>
<feature type="mutagenesis site" description="Partial loss of activity." evidence="8">
    <original>P</original>
    <variation>L</variation>
    <location>
        <position position="179"/>
    </location>
</feature>
<feature type="mutagenesis site" description="Loss of activity." evidence="6">
    <original>C</original>
    <variation>S</variation>
    <location>
        <position position="180"/>
    </location>
</feature>
<feature type="mutagenesis site" description="Loss of activity." evidence="6">
    <original>H</original>
    <variation>R</variation>
    <location>
        <position position="181"/>
    </location>
</feature>
<feature type="mutagenesis site" description="Loss of activity." evidence="8">
    <original>S</original>
    <variation>L</variation>
    <location>
        <position position="183"/>
    </location>
</feature>
<feature type="mutagenesis site" description="No loss of activity." evidence="6">
    <original>H</original>
    <variation>R</variation>
    <location>
        <position position="184"/>
    </location>
</feature>
<feature type="mutagenesis site" description="Partial loss of activity." evidence="8">
    <original>D</original>
    <variation>N</variation>
    <location>
        <position position="186"/>
    </location>
</feature>
<feature type="mutagenesis site" description="Loss of activity." evidence="8">
    <original>G</original>
    <variation>D</variation>
    <location>
        <position position="189"/>
    </location>
</feature>
<feature type="mutagenesis site" description="No loss of activity." evidence="8">
    <original>P</original>
    <variation>S</variation>
    <location>
        <position position="195"/>
    </location>
</feature>
<feature type="mutagenesis site" description="No loss of activity." evidence="8">
    <original>A</original>
    <variation>T</variation>
    <location>
        <position position="196"/>
    </location>
</feature>
<feature type="mutagenesis site" description="Loss of activity." evidence="8 9">
    <original>P</original>
    <variation>S</variation>
    <location>
        <position position="203"/>
    </location>
</feature>
<feature type="strand" evidence="29">
    <location>
        <begin position="33"/>
        <end position="35"/>
    </location>
</feature>
<feature type="turn" evidence="28">
    <location>
        <begin position="40"/>
        <end position="42"/>
    </location>
</feature>
<feature type="strand" evidence="27">
    <location>
        <begin position="46"/>
        <end position="48"/>
    </location>
</feature>
<feature type="helix" evidence="28">
    <location>
        <begin position="51"/>
        <end position="80"/>
    </location>
</feature>
<feature type="strand" evidence="30">
    <location>
        <begin position="81"/>
        <end position="83"/>
    </location>
</feature>
<feature type="helix" evidence="28">
    <location>
        <begin position="86"/>
        <end position="88"/>
    </location>
</feature>
<feature type="strand" evidence="28">
    <location>
        <begin position="94"/>
        <end position="97"/>
    </location>
</feature>
<feature type="helix" evidence="28">
    <location>
        <begin position="98"/>
        <end position="100"/>
    </location>
</feature>
<feature type="strand" evidence="32">
    <location>
        <begin position="103"/>
        <end position="105"/>
    </location>
</feature>
<feature type="strand" evidence="28">
    <location>
        <begin position="106"/>
        <end position="111"/>
    </location>
</feature>
<feature type="strand" evidence="28">
    <location>
        <begin position="114"/>
        <end position="120"/>
    </location>
</feature>
<feature type="helix" evidence="28">
    <location>
        <begin position="123"/>
        <end position="130"/>
    </location>
</feature>
<feature type="helix" evidence="28">
    <location>
        <begin position="134"/>
        <end position="136"/>
    </location>
</feature>
<feature type="turn" evidence="28">
    <location>
        <begin position="144"/>
        <end position="146"/>
    </location>
</feature>
<feature type="strand" evidence="28">
    <location>
        <begin position="152"/>
        <end position="156"/>
    </location>
</feature>
<feature type="turn" evidence="28">
    <location>
        <begin position="160"/>
        <end position="162"/>
    </location>
</feature>
<feature type="strand" evidence="28">
    <location>
        <begin position="167"/>
        <end position="170"/>
    </location>
</feature>
<feature type="turn" evidence="28">
    <location>
        <begin position="171"/>
        <end position="174"/>
    </location>
</feature>
<feature type="strand" evidence="28">
    <location>
        <begin position="175"/>
        <end position="178"/>
    </location>
</feature>
<feature type="turn" evidence="28">
    <location>
        <begin position="179"/>
        <end position="182"/>
    </location>
</feature>
<feature type="strand" evidence="28">
    <location>
        <begin position="183"/>
        <end position="185"/>
    </location>
</feature>
<feature type="strand" evidence="31">
    <location>
        <begin position="187"/>
        <end position="189"/>
    </location>
</feature>
<feature type="strand" evidence="28">
    <location>
        <begin position="191"/>
        <end position="195"/>
    </location>
</feature>
<feature type="strand" evidence="28">
    <location>
        <begin position="205"/>
        <end position="208"/>
    </location>
</feature>
<feature type="strand" evidence="28">
    <location>
        <begin position="211"/>
        <end position="214"/>
    </location>
</feature>
<evidence type="ECO:0000255" key="1">
    <source>
        <dbReference type="PROSITE-ProRule" id="PRU00628"/>
    </source>
</evidence>
<evidence type="ECO:0000269" key="2">
    <source>
    </source>
</evidence>
<evidence type="ECO:0000269" key="3">
    <source>
    </source>
</evidence>
<evidence type="ECO:0000269" key="4">
    <source>
    </source>
</evidence>
<evidence type="ECO:0000269" key="5">
    <source>
    </source>
</evidence>
<evidence type="ECO:0000269" key="6">
    <source>
    </source>
</evidence>
<evidence type="ECO:0000269" key="7">
    <source>
    </source>
</evidence>
<evidence type="ECO:0000269" key="8">
    <source>
    </source>
</evidence>
<evidence type="ECO:0000269" key="9">
    <source>
    </source>
</evidence>
<evidence type="ECO:0000269" key="10">
    <source>
    </source>
</evidence>
<evidence type="ECO:0000269" key="11">
    <source>
    </source>
</evidence>
<evidence type="ECO:0000269" key="12">
    <source>
    </source>
</evidence>
<evidence type="ECO:0000269" key="13">
    <source>
    </source>
</evidence>
<evidence type="ECO:0000269" key="14">
    <source>
    </source>
</evidence>
<evidence type="ECO:0000305" key="15"/>
<evidence type="ECO:0000305" key="16">
    <source>
    </source>
</evidence>
<evidence type="ECO:0000305" key="17">
    <source>
    </source>
</evidence>
<evidence type="ECO:0000305" key="18">
    <source>
    </source>
</evidence>
<evidence type="ECO:0007744" key="19">
    <source>
        <dbReference type="PDB" id="1EZV"/>
    </source>
</evidence>
<evidence type="ECO:0007744" key="20">
    <source>
        <dbReference type="PDB" id="1KB9"/>
    </source>
</evidence>
<evidence type="ECO:0007744" key="21">
    <source>
        <dbReference type="PDB" id="1KYO"/>
    </source>
</evidence>
<evidence type="ECO:0007744" key="22">
    <source>
        <dbReference type="PDB" id="1P84"/>
    </source>
</evidence>
<evidence type="ECO:0007744" key="23">
    <source>
        <dbReference type="PDB" id="2IBZ"/>
    </source>
</evidence>
<evidence type="ECO:0007744" key="24">
    <source>
        <dbReference type="PDB" id="3CX5"/>
    </source>
</evidence>
<evidence type="ECO:0007744" key="25">
    <source>
        <dbReference type="PDB" id="3CXH"/>
    </source>
</evidence>
<evidence type="ECO:0007744" key="26">
    <source>
        <dbReference type="PDB" id="4PD4"/>
    </source>
</evidence>
<evidence type="ECO:0007829" key="27">
    <source>
        <dbReference type="PDB" id="1EZV"/>
    </source>
</evidence>
<evidence type="ECO:0007829" key="28">
    <source>
        <dbReference type="PDB" id="3CX5"/>
    </source>
</evidence>
<evidence type="ECO:0007829" key="29">
    <source>
        <dbReference type="PDB" id="6T0B"/>
    </source>
</evidence>
<evidence type="ECO:0007829" key="30">
    <source>
        <dbReference type="PDB" id="6T15"/>
    </source>
</evidence>
<evidence type="ECO:0007829" key="31">
    <source>
        <dbReference type="PDB" id="6YMX"/>
    </source>
</evidence>
<evidence type="ECO:0007829" key="32">
    <source>
        <dbReference type="PDB" id="9ETZ"/>
    </source>
</evidence>
<sequence length="215" mass="23365">MLGIRSSVKTCFKPMSLTSKRLISQSLLASKSTYRTPNFDDVLKENNDADKGRSYAYFMVGAMGLLSSAGAKSTVETFISSMTATADVLAMAKVEVNLAAIPLGKNVVVKWQGKPVFIRHRTPHEIQEANSVDMSALKDPQTDADRVKDPQWLIMLGICTHLGCVPIGEAGDFGGWFCPCHGSHYDISGRIRKGPAPLNLEIPAYEFDGDKVIVG</sequence>
<accession>P08067</accession>
<accession>D3DLM4</accession>